<keyword id="KW-0169">Cobalamin biosynthesis</keyword>
<keyword id="KW-0489">Methyltransferase</keyword>
<keyword id="KW-0949">S-adenosyl-L-methionine</keyword>
<keyword id="KW-0808">Transferase</keyword>
<accession>Q3ANK8</accession>
<sequence length="368" mass="39108">MSGSIAPSSPGLTLPVWVAAAAKAALQVLLDEPFNAEQQLNQGSDRPSLQVPVCSAAPLSDGQALGISRCDPGPGLDLTRDLEVWVRVAWIATPQPVLELQPGEGVGRLGPEGDICLSGFARELLERNLLPLLPAGRGLMVQPILPRGRSLAQRTSNAAFGVVDGLALIGTQAEVQRSAAPDQLQEVLAELEARAADPAFQGRLVLVIGENGLDLARQQGLGPVLKVGNWVGPVLVAAAEAGVRDLLLLGYHGKLIKLAGGIFHTHHHLADGRLEVLVALGLDAGLSTAELLQCRGAASVEEAFQALDPDQARALGQHLAAIVEQRSHSYLARYGAWSMRIGAALFDRSRTLRWWGPEAEKRFFTLRD</sequence>
<protein>
    <recommendedName>
        <fullName evidence="1">Cobalt-precorrin-5B C(1)-methyltransferase</fullName>
        <ecNumber evidence="1">2.1.1.195</ecNumber>
    </recommendedName>
    <alternativeName>
        <fullName evidence="1">Cobalt-precorrin-6A synthase</fullName>
    </alternativeName>
</protein>
<gene>
    <name evidence="1" type="primary">cbiD</name>
    <name type="ordered locus">Syncc9605_0045</name>
</gene>
<evidence type="ECO:0000255" key="1">
    <source>
        <dbReference type="HAMAP-Rule" id="MF_00787"/>
    </source>
</evidence>
<name>CBID_SYNSC</name>
<organism>
    <name type="scientific">Synechococcus sp. (strain CC9605)</name>
    <dbReference type="NCBI Taxonomy" id="110662"/>
    <lineage>
        <taxon>Bacteria</taxon>
        <taxon>Bacillati</taxon>
        <taxon>Cyanobacteriota</taxon>
        <taxon>Cyanophyceae</taxon>
        <taxon>Synechococcales</taxon>
        <taxon>Synechococcaceae</taxon>
        <taxon>Synechococcus</taxon>
    </lineage>
</organism>
<comment type="function">
    <text evidence="1">Catalyzes the methylation of C-1 in cobalt-precorrin-5B to form cobalt-precorrin-6A.</text>
</comment>
<comment type="catalytic activity">
    <reaction evidence="1">
        <text>Co-precorrin-5B + S-adenosyl-L-methionine = Co-precorrin-6A + S-adenosyl-L-homocysteine</text>
        <dbReference type="Rhea" id="RHEA:26285"/>
        <dbReference type="ChEBI" id="CHEBI:57856"/>
        <dbReference type="ChEBI" id="CHEBI:59789"/>
        <dbReference type="ChEBI" id="CHEBI:60063"/>
        <dbReference type="ChEBI" id="CHEBI:60064"/>
        <dbReference type="EC" id="2.1.1.195"/>
    </reaction>
</comment>
<comment type="pathway">
    <text evidence="1">Cofactor biosynthesis; adenosylcobalamin biosynthesis; cob(II)yrinate a,c-diamide from sirohydrochlorin (anaerobic route): step 6/10.</text>
</comment>
<comment type="similarity">
    <text evidence="1">Belongs to the CbiD family.</text>
</comment>
<dbReference type="EC" id="2.1.1.195" evidence="1"/>
<dbReference type="EMBL" id="CP000110">
    <property type="protein sequence ID" value="ABB33824.1"/>
    <property type="molecule type" value="Genomic_DNA"/>
</dbReference>
<dbReference type="RefSeq" id="WP_011363086.1">
    <property type="nucleotide sequence ID" value="NC_007516.1"/>
</dbReference>
<dbReference type="SMR" id="Q3ANK8"/>
<dbReference type="STRING" id="110662.Syncc9605_0045"/>
<dbReference type="KEGG" id="syd:Syncc9605_0045"/>
<dbReference type="eggNOG" id="COG1903">
    <property type="taxonomic scope" value="Bacteria"/>
</dbReference>
<dbReference type="HOGENOM" id="CLU_041273_1_2_3"/>
<dbReference type="OrthoDB" id="6439987at2"/>
<dbReference type="UniPathway" id="UPA00148">
    <property type="reaction ID" value="UER00227"/>
</dbReference>
<dbReference type="GO" id="GO:0043780">
    <property type="term" value="F:cobalt-precorrin-5B C1-methyltransferase activity"/>
    <property type="evidence" value="ECO:0007669"/>
    <property type="project" value="RHEA"/>
</dbReference>
<dbReference type="GO" id="GO:0019251">
    <property type="term" value="P:anaerobic cobalamin biosynthetic process"/>
    <property type="evidence" value="ECO:0007669"/>
    <property type="project" value="UniProtKB-UniRule"/>
</dbReference>
<dbReference type="GO" id="GO:0032259">
    <property type="term" value="P:methylation"/>
    <property type="evidence" value="ECO:0007669"/>
    <property type="project" value="UniProtKB-KW"/>
</dbReference>
<dbReference type="Gene3D" id="3.30.2110.10">
    <property type="entry name" value="CbiD-like"/>
    <property type="match status" value="1"/>
</dbReference>
<dbReference type="HAMAP" id="MF_00787">
    <property type="entry name" value="CbiD"/>
    <property type="match status" value="1"/>
</dbReference>
<dbReference type="InterPro" id="IPR002748">
    <property type="entry name" value="CbiD"/>
</dbReference>
<dbReference type="InterPro" id="IPR036074">
    <property type="entry name" value="CbiD_sf"/>
</dbReference>
<dbReference type="NCBIfam" id="TIGR00312">
    <property type="entry name" value="cbiD"/>
    <property type="match status" value="1"/>
</dbReference>
<dbReference type="PANTHER" id="PTHR35863">
    <property type="entry name" value="COBALT-PRECORRIN-5B C(1)-METHYLTRANSFERASE"/>
    <property type="match status" value="1"/>
</dbReference>
<dbReference type="PANTHER" id="PTHR35863:SF1">
    <property type="entry name" value="COBALT-PRECORRIN-5B C(1)-METHYLTRANSFERASE"/>
    <property type="match status" value="1"/>
</dbReference>
<dbReference type="Pfam" id="PF01888">
    <property type="entry name" value="CbiD"/>
    <property type="match status" value="1"/>
</dbReference>
<dbReference type="PIRSF" id="PIRSF026782">
    <property type="entry name" value="CbiD"/>
    <property type="match status" value="1"/>
</dbReference>
<dbReference type="SUPFAM" id="SSF111342">
    <property type="entry name" value="CbiD-like"/>
    <property type="match status" value="1"/>
</dbReference>
<reference key="1">
    <citation type="submission" date="2005-07" db="EMBL/GenBank/DDBJ databases">
        <title>Complete sequence of Synechococcus sp. CC9605.</title>
        <authorList>
            <consortium name="US DOE Joint Genome Institute"/>
            <person name="Copeland A."/>
            <person name="Lucas S."/>
            <person name="Lapidus A."/>
            <person name="Barry K."/>
            <person name="Detter J.C."/>
            <person name="Glavina T."/>
            <person name="Hammon N."/>
            <person name="Israni S."/>
            <person name="Pitluck S."/>
            <person name="Schmutz J."/>
            <person name="Martinez M."/>
            <person name="Larimer F."/>
            <person name="Land M."/>
            <person name="Kyrpides N."/>
            <person name="Ivanova N."/>
            <person name="Richardson P."/>
        </authorList>
    </citation>
    <scope>NUCLEOTIDE SEQUENCE [LARGE SCALE GENOMIC DNA]</scope>
    <source>
        <strain>CC9605</strain>
    </source>
</reference>
<feature type="chain" id="PRO_0000257780" description="Cobalt-precorrin-5B C(1)-methyltransferase">
    <location>
        <begin position="1"/>
        <end position="368"/>
    </location>
</feature>
<proteinExistence type="inferred from homology"/>